<evidence type="ECO:0000255" key="1">
    <source>
        <dbReference type="HAMAP-Rule" id="MF_00150"/>
    </source>
</evidence>
<comment type="function">
    <text evidence="1">Catalyzes the NADPH-dependent reduction of N-acetyl-5-glutamyl phosphate to yield N-acetyl-L-glutamate 5-semialdehyde.</text>
</comment>
<comment type="catalytic activity">
    <reaction evidence="1">
        <text>N-acetyl-L-glutamate 5-semialdehyde + phosphate + NADP(+) = N-acetyl-L-glutamyl 5-phosphate + NADPH + H(+)</text>
        <dbReference type="Rhea" id="RHEA:21588"/>
        <dbReference type="ChEBI" id="CHEBI:15378"/>
        <dbReference type="ChEBI" id="CHEBI:29123"/>
        <dbReference type="ChEBI" id="CHEBI:43474"/>
        <dbReference type="ChEBI" id="CHEBI:57783"/>
        <dbReference type="ChEBI" id="CHEBI:57936"/>
        <dbReference type="ChEBI" id="CHEBI:58349"/>
        <dbReference type="EC" id="1.2.1.38"/>
    </reaction>
</comment>
<comment type="pathway">
    <text evidence="1">Amino-acid biosynthesis; L-arginine biosynthesis; N(2)-acetyl-L-ornithine from L-glutamate: step 3/4.</text>
</comment>
<comment type="subcellular location">
    <subcellularLocation>
        <location evidence="1">Cytoplasm</location>
    </subcellularLocation>
</comment>
<comment type="similarity">
    <text evidence="1">Belongs to the NAGSA dehydrogenase family. Type 1 subfamily.</text>
</comment>
<protein>
    <recommendedName>
        <fullName evidence="1">N-acetyl-gamma-glutamyl-phosphate reductase</fullName>
        <shortName evidence="1">AGPR</shortName>
        <ecNumber evidence="1">1.2.1.38</ecNumber>
    </recommendedName>
    <alternativeName>
        <fullName evidence="1">N-acetyl-glutamate semialdehyde dehydrogenase</fullName>
        <shortName evidence="1">NAGSA dehydrogenase</shortName>
    </alternativeName>
</protein>
<sequence>MSERVNVAILGASGYTGAELVRLLARHPRVTLAALTANRKAGQAFASVFPHLGGLDLPVLSTIEAVDWSAIDFVFCALPHGTTQTIIGDLLNGPHGGRLRIADLSADFRLADPMVYQTWYGHAHEAVELQKEAVYGLTEINRAAIATARLVAVPGCYPTSAQLPLIPLLRAGLIDPDAIIIDAKSGASGAGRDAKEGSLHCEVSEGIHAYGVGTHRHGPEIEQGLSLAVGRPVAVTFTPHLMPMNRGILSTIYLRATAGNDATTLRQALSAAYADEAFVRVVPEGVSPHTRHVRGSNFVLIGVHADRVPGRVIVTCVEDNLVKGASGQAIQDMNVMLGFPETLGLDQQPLFP</sequence>
<organism>
    <name type="scientific">Rhodospirillum rubrum (strain ATCC 11170 / ATH 1.1.1 / DSM 467 / LMG 4362 / NCIMB 8255 / S1)</name>
    <dbReference type="NCBI Taxonomy" id="269796"/>
    <lineage>
        <taxon>Bacteria</taxon>
        <taxon>Pseudomonadati</taxon>
        <taxon>Pseudomonadota</taxon>
        <taxon>Alphaproteobacteria</taxon>
        <taxon>Rhodospirillales</taxon>
        <taxon>Rhodospirillaceae</taxon>
        <taxon>Rhodospirillum</taxon>
    </lineage>
</organism>
<feature type="chain" id="PRO_1000011048" description="N-acetyl-gamma-glutamyl-phosphate reductase">
    <location>
        <begin position="1"/>
        <end position="352"/>
    </location>
</feature>
<feature type="active site" evidence="1">
    <location>
        <position position="156"/>
    </location>
</feature>
<reference key="1">
    <citation type="journal article" date="2011" name="Stand. Genomic Sci.">
        <title>Complete genome sequence of Rhodospirillum rubrum type strain (S1).</title>
        <authorList>
            <person name="Munk A.C."/>
            <person name="Copeland A."/>
            <person name="Lucas S."/>
            <person name="Lapidus A."/>
            <person name="Del Rio T.G."/>
            <person name="Barry K."/>
            <person name="Detter J.C."/>
            <person name="Hammon N."/>
            <person name="Israni S."/>
            <person name="Pitluck S."/>
            <person name="Brettin T."/>
            <person name="Bruce D."/>
            <person name="Han C."/>
            <person name="Tapia R."/>
            <person name="Gilna P."/>
            <person name="Schmutz J."/>
            <person name="Larimer F."/>
            <person name="Land M."/>
            <person name="Kyrpides N.C."/>
            <person name="Mavromatis K."/>
            <person name="Richardson P."/>
            <person name="Rohde M."/>
            <person name="Goeker M."/>
            <person name="Klenk H.P."/>
            <person name="Zhang Y."/>
            <person name="Roberts G.P."/>
            <person name="Reslewic S."/>
            <person name="Schwartz D.C."/>
        </authorList>
    </citation>
    <scope>NUCLEOTIDE SEQUENCE [LARGE SCALE GENOMIC DNA]</scope>
    <source>
        <strain>ATCC 11170 / ATH 1.1.1 / DSM 467 / LMG 4362 / NCIMB 8255 / S1</strain>
    </source>
</reference>
<gene>
    <name evidence="1" type="primary">argC</name>
    <name type="ordered locus">Rru_A2421</name>
</gene>
<accession>Q2RRM4</accession>
<proteinExistence type="inferred from homology"/>
<name>ARGC_RHORT</name>
<keyword id="KW-0028">Amino-acid biosynthesis</keyword>
<keyword id="KW-0055">Arginine biosynthesis</keyword>
<keyword id="KW-0963">Cytoplasm</keyword>
<keyword id="KW-0521">NADP</keyword>
<keyword id="KW-0560">Oxidoreductase</keyword>
<keyword id="KW-1185">Reference proteome</keyword>
<dbReference type="EC" id="1.2.1.38" evidence="1"/>
<dbReference type="EMBL" id="CP000230">
    <property type="protein sequence ID" value="ABC23221.1"/>
    <property type="molecule type" value="Genomic_DNA"/>
</dbReference>
<dbReference type="RefSeq" id="WP_011390174.1">
    <property type="nucleotide sequence ID" value="NC_007643.1"/>
</dbReference>
<dbReference type="RefSeq" id="YP_427508.1">
    <property type="nucleotide sequence ID" value="NC_007643.1"/>
</dbReference>
<dbReference type="SMR" id="Q2RRM4"/>
<dbReference type="STRING" id="269796.Rru_A2421"/>
<dbReference type="EnsemblBacteria" id="ABC23221">
    <property type="protein sequence ID" value="ABC23221"/>
    <property type="gene ID" value="Rru_A2421"/>
</dbReference>
<dbReference type="KEGG" id="rru:Rru_A2421"/>
<dbReference type="PATRIC" id="fig|269796.9.peg.2524"/>
<dbReference type="eggNOG" id="COG0002">
    <property type="taxonomic scope" value="Bacteria"/>
</dbReference>
<dbReference type="HOGENOM" id="CLU_006384_0_1_5"/>
<dbReference type="PhylomeDB" id="Q2RRM4"/>
<dbReference type="UniPathway" id="UPA00068">
    <property type="reaction ID" value="UER00108"/>
</dbReference>
<dbReference type="Proteomes" id="UP000001929">
    <property type="component" value="Chromosome"/>
</dbReference>
<dbReference type="GO" id="GO:0005737">
    <property type="term" value="C:cytoplasm"/>
    <property type="evidence" value="ECO:0007669"/>
    <property type="project" value="UniProtKB-SubCell"/>
</dbReference>
<dbReference type="GO" id="GO:0003942">
    <property type="term" value="F:N-acetyl-gamma-glutamyl-phosphate reductase activity"/>
    <property type="evidence" value="ECO:0007669"/>
    <property type="project" value="UniProtKB-UniRule"/>
</dbReference>
<dbReference type="GO" id="GO:0051287">
    <property type="term" value="F:NAD binding"/>
    <property type="evidence" value="ECO:0007669"/>
    <property type="project" value="InterPro"/>
</dbReference>
<dbReference type="GO" id="GO:0070401">
    <property type="term" value="F:NADP+ binding"/>
    <property type="evidence" value="ECO:0007669"/>
    <property type="project" value="InterPro"/>
</dbReference>
<dbReference type="GO" id="GO:0006526">
    <property type="term" value="P:L-arginine biosynthetic process"/>
    <property type="evidence" value="ECO:0007669"/>
    <property type="project" value="UniProtKB-UniRule"/>
</dbReference>
<dbReference type="CDD" id="cd23934">
    <property type="entry name" value="AGPR_1_C"/>
    <property type="match status" value="1"/>
</dbReference>
<dbReference type="CDD" id="cd17895">
    <property type="entry name" value="AGPR_1_N"/>
    <property type="match status" value="1"/>
</dbReference>
<dbReference type="FunFam" id="3.30.360.10:FF:000014">
    <property type="entry name" value="N-acetyl-gamma-glutamyl-phosphate reductase"/>
    <property type="match status" value="1"/>
</dbReference>
<dbReference type="Gene3D" id="3.30.360.10">
    <property type="entry name" value="Dihydrodipicolinate Reductase, domain 2"/>
    <property type="match status" value="1"/>
</dbReference>
<dbReference type="Gene3D" id="3.40.50.720">
    <property type="entry name" value="NAD(P)-binding Rossmann-like Domain"/>
    <property type="match status" value="1"/>
</dbReference>
<dbReference type="HAMAP" id="MF_00150">
    <property type="entry name" value="ArgC_type1"/>
    <property type="match status" value="1"/>
</dbReference>
<dbReference type="InterPro" id="IPR023013">
    <property type="entry name" value="AGPR_AS"/>
</dbReference>
<dbReference type="InterPro" id="IPR000706">
    <property type="entry name" value="AGPR_type-1"/>
</dbReference>
<dbReference type="InterPro" id="IPR036291">
    <property type="entry name" value="NAD(P)-bd_dom_sf"/>
</dbReference>
<dbReference type="InterPro" id="IPR050085">
    <property type="entry name" value="NAGSA_dehydrogenase"/>
</dbReference>
<dbReference type="InterPro" id="IPR000534">
    <property type="entry name" value="Semialdehyde_DH_NAD-bd"/>
</dbReference>
<dbReference type="NCBIfam" id="TIGR01850">
    <property type="entry name" value="argC"/>
    <property type="match status" value="1"/>
</dbReference>
<dbReference type="PANTHER" id="PTHR32338:SF10">
    <property type="entry name" value="N-ACETYL-GAMMA-GLUTAMYL-PHOSPHATE REDUCTASE, CHLOROPLASTIC-RELATED"/>
    <property type="match status" value="1"/>
</dbReference>
<dbReference type="PANTHER" id="PTHR32338">
    <property type="entry name" value="N-ACETYL-GAMMA-GLUTAMYL-PHOSPHATE REDUCTASE, CHLOROPLASTIC-RELATED-RELATED"/>
    <property type="match status" value="1"/>
</dbReference>
<dbReference type="Pfam" id="PF01118">
    <property type="entry name" value="Semialdhyde_dh"/>
    <property type="match status" value="1"/>
</dbReference>
<dbReference type="Pfam" id="PF22698">
    <property type="entry name" value="Semialdhyde_dhC_1"/>
    <property type="match status" value="1"/>
</dbReference>
<dbReference type="SMART" id="SM00859">
    <property type="entry name" value="Semialdhyde_dh"/>
    <property type="match status" value="1"/>
</dbReference>
<dbReference type="SUPFAM" id="SSF55347">
    <property type="entry name" value="Glyceraldehyde-3-phosphate dehydrogenase-like, C-terminal domain"/>
    <property type="match status" value="1"/>
</dbReference>
<dbReference type="SUPFAM" id="SSF51735">
    <property type="entry name" value="NAD(P)-binding Rossmann-fold domains"/>
    <property type="match status" value="1"/>
</dbReference>
<dbReference type="PROSITE" id="PS01224">
    <property type="entry name" value="ARGC"/>
    <property type="match status" value="1"/>
</dbReference>